<proteinExistence type="inferred from homology"/>
<gene>
    <name type="ordered locus">BAA_4008</name>
</gene>
<organism>
    <name type="scientific">Bacillus anthracis (strain A0248)</name>
    <dbReference type="NCBI Taxonomy" id="592021"/>
    <lineage>
        <taxon>Bacteria</taxon>
        <taxon>Bacillati</taxon>
        <taxon>Bacillota</taxon>
        <taxon>Bacilli</taxon>
        <taxon>Bacillales</taxon>
        <taxon>Bacillaceae</taxon>
        <taxon>Bacillus</taxon>
        <taxon>Bacillus cereus group</taxon>
    </lineage>
</organism>
<protein>
    <recommendedName>
        <fullName evidence="1">UPF0122 protein BAA_4008</fullName>
    </recommendedName>
</protein>
<dbReference type="EMBL" id="CP001598">
    <property type="protein sequence ID" value="ACQ49490.1"/>
    <property type="molecule type" value="Genomic_DNA"/>
</dbReference>
<dbReference type="RefSeq" id="WP_000891062.1">
    <property type="nucleotide sequence ID" value="NC_012659.1"/>
</dbReference>
<dbReference type="SMR" id="C3P5P7"/>
<dbReference type="KEGG" id="bai:BAA_4008"/>
<dbReference type="HOGENOM" id="CLU_129218_1_0_9"/>
<dbReference type="Gene3D" id="1.10.10.10">
    <property type="entry name" value="Winged helix-like DNA-binding domain superfamily/Winged helix DNA-binding domain"/>
    <property type="match status" value="1"/>
</dbReference>
<dbReference type="HAMAP" id="MF_00245">
    <property type="entry name" value="UPF0122"/>
    <property type="match status" value="1"/>
</dbReference>
<dbReference type="InterPro" id="IPR013324">
    <property type="entry name" value="RNA_pol_sigma_r3/r4-like"/>
</dbReference>
<dbReference type="InterPro" id="IPR007394">
    <property type="entry name" value="UPF0122"/>
</dbReference>
<dbReference type="InterPro" id="IPR054831">
    <property type="entry name" value="UPF0122_fam_protein"/>
</dbReference>
<dbReference type="InterPro" id="IPR036388">
    <property type="entry name" value="WH-like_DNA-bd_sf"/>
</dbReference>
<dbReference type="NCBIfam" id="NF001068">
    <property type="entry name" value="PRK00118.1-4"/>
    <property type="match status" value="1"/>
</dbReference>
<dbReference type="NCBIfam" id="NF001070">
    <property type="entry name" value="PRK00118.1-6"/>
    <property type="match status" value="1"/>
</dbReference>
<dbReference type="NCBIfam" id="NF045758">
    <property type="entry name" value="YlxM"/>
    <property type="match status" value="1"/>
</dbReference>
<dbReference type="PANTHER" id="PTHR40083">
    <property type="entry name" value="UPF0122 PROTEIN CBO2450/CLC_2298"/>
    <property type="match status" value="1"/>
</dbReference>
<dbReference type="PANTHER" id="PTHR40083:SF1">
    <property type="entry name" value="UPF0122 PROTEIN YLXM"/>
    <property type="match status" value="1"/>
</dbReference>
<dbReference type="Pfam" id="PF04297">
    <property type="entry name" value="UPF0122"/>
    <property type="match status" value="1"/>
</dbReference>
<dbReference type="SUPFAM" id="SSF88659">
    <property type="entry name" value="Sigma3 and sigma4 domains of RNA polymerase sigma factors"/>
    <property type="match status" value="1"/>
</dbReference>
<reference key="1">
    <citation type="submission" date="2009-04" db="EMBL/GenBank/DDBJ databases">
        <title>Genome sequence of Bacillus anthracis A0248.</title>
        <authorList>
            <person name="Dodson R.J."/>
            <person name="Munk A.C."/>
            <person name="Bruce D."/>
            <person name="Detter C."/>
            <person name="Tapia R."/>
            <person name="Sutton G."/>
            <person name="Sims D."/>
            <person name="Brettin T."/>
        </authorList>
    </citation>
    <scope>NUCLEOTIDE SEQUENCE [LARGE SCALE GENOMIC DNA]</scope>
    <source>
        <strain>A0248</strain>
    </source>
</reference>
<feature type="chain" id="PRO_1000197581" description="UPF0122 protein BAA_4008">
    <location>
        <begin position="1"/>
        <end position="110"/>
    </location>
</feature>
<accession>C3P5P7</accession>
<name>Y4008_BACAA</name>
<evidence type="ECO:0000255" key="1">
    <source>
        <dbReference type="HAMAP-Rule" id="MF_00245"/>
    </source>
</evidence>
<comment type="function">
    <text evidence="1">Might take part in the signal recognition particle (SRP) pathway. This is inferred from the conservation of its genetic proximity to ftsY/ffh. May be a regulatory protein.</text>
</comment>
<comment type="similarity">
    <text evidence="1">Belongs to the UPF0122 family.</text>
</comment>
<sequence>MLEKTTRMNYLFDFYQSLLTQKQRSYMSLYYLDDLSLGEIAEEFDVSRQAVYDNIKRTEAMLEEYEEKLVLLQKFQERQRLVAKLKQLISEEEHVNEEMKQVVEAIEKLD</sequence>